<gene>
    <name type="primary">twsg1a</name>
    <name type="synonym">tsg</name>
    <name type="synonym">twsg1</name>
</gene>
<sequence length="217" mass="23925">MRPALFLCPVLISVLFLLSSLSLISGCNKALCASDVSKCLLQGLCQCRPQEGNCSCCKECMLCLSSLWEECCDCVGMCNPRSYNDSPATSKSTVEELYRPIPSLFRALTEGDAPINMMVVSFPVAEELSHHENLVSFLETLDSQSQNISLPTSSAQDDALCTVVYFDDCVSIRQCKQYCESMGGSKYRWFHNACCECIGPECLDYGSKTVKCMNCLI</sequence>
<dbReference type="EMBL" id="AJ297393">
    <property type="protein sequence ID" value="CAC05526.1"/>
    <property type="molecule type" value="mRNA"/>
</dbReference>
<dbReference type="EMBL" id="AF261692">
    <property type="protein sequence ID" value="AAK13255.1"/>
    <property type="molecule type" value="mRNA"/>
</dbReference>
<dbReference type="EMBL" id="BC051451">
    <property type="protein sequence ID" value="AAH51451.1"/>
    <property type="molecule type" value="mRNA"/>
</dbReference>
<dbReference type="SMR" id="Q9DGH0"/>
<dbReference type="FunCoup" id="Q9DGH0">
    <property type="interactions" value="1124"/>
</dbReference>
<dbReference type="STRING" id="7955.ENSDARP00000129959"/>
<dbReference type="GlyCosmos" id="Q9DGH0">
    <property type="glycosylation" value="2 sites, No reported glycans"/>
</dbReference>
<dbReference type="PaxDb" id="7955-ENSDARP00000049962"/>
<dbReference type="AGR" id="ZFIN:ZDB-GENE-010509-2"/>
<dbReference type="ZFIN" id="ZDB-GENE-010509-2">
    <property type="gene designation" value="twsg1a"/>
</dbReference>
<dbReference type="eggNOG" id="ENOG502QRE9">
    <property type="taxonomic scope" value="Eukaryota"/>
</dbReference>
<dbReference type="InParanoid" id="Q9DGH0"/>
<dbReference type="PhylomeDB" id="Q9DGH0"/>
<dbReference type="PRO" id="PR:Q9DGH0"/>
<dbReference type="Proteomes" id="UP000000437">
    <property type="component" value="Unplaced"/>
</dbReference>
<dbReference type="GO" id="GO:0005615">
    <property type="term" value="C:extracellular space"/>
    <property type="evidence" value="ECO:0000318"/>
    <property type="project" value="GO_Central"/>
</dbReference>
<dbReference type="GO" id="GO:0001568">
    <property type="term" value="P:blood vessel development"/>
    <property type="evidence" value="ECO:0000316"/>
    <property type="project" value="ZFIN"/>
</dbReference>
<dbReference type="GO" id="GO:0030510">
    <property type="term" value="P:regulation of BMP signaling pathway"/>
    <property type="evidence" value="ECO:0000318"/>
    <property type="project" value="GO_Central"/>
</dbReference>
<dbReference type="InterPro" id="IPR006761">
    <property type="entry name" value="Tsg"/>
</dbReference>
<dbReference type="PANTHER" id="PTHR12312">
    <property type="entry name" value="TWISTED GASTRULATION PROTEIN HOMOLOG 1-A-RELATED"/>
    <property type="match status" value="1"/>
</dbReference>
<dbReference type="PANTHER" id="PTHR12312:SF16">
    <property type="entry name" value="TWISTED GASTRULATION PROTEIN HOMOLOG 1-A-RELATED"/>
    <property type="match status" value="1"/>
</dbReference>
<dbReference type="Pfam" id="PF04668">
    <property type="entry name" value="Tsg"/>
    <property type="match status" value="1"/>
</dbReference>
<dbReference type="Pfam" id="PF23782">
    <property type="entry name" value="Tsg_N"/>
    <property type="match status" value="1"/>
</dbReference>
<evidence type="ECO:0000250" key="1"/>
<evidence type="ECO:0000255" key="2"/>
<evidence type="ECO:0000305" key="3"/>
<reference key="1">
    <citation type="journal article" date="2001" name="Mamm. Genome">
        <title>Evolutionary conservation, developmental expression, and genomic mapping of mammalian Twisted gastrulation.</title>
        <authorList>
            <person name="Graf D."/>
            <person name="Timmons P.M."/>
            <person name="Hitchins M."/>
            <person name="Episkopou V."/>
            <person name="Moore G."/>
            <person name="Ito T."/>
            <person name="Fujiyama A."/>
            <person name="Fisher A.G."/>
            <person name="Merkenschlager M."/>
        </authorList>
    </citation>
    <scope>NUCLEOTIDE SEQUENCE [MRNA]</scope>
</reference>
<reference key="2">
    <citation type="journal article" date="2001" name="Nature">
        <title>Homologues of Twisted gastrulation are extracellular cofactors in antagonism of BMP signalling.</title>
        <authorList>
            <person name="Scott I.C."/>
            <person name="Blitz I.L."/>
            <person name="Pappano W.N."/>
            <person name="Maas S.A."/>
            <person name="Cho K.W.Y."/>
            <person name="Greenspan D.S."/>
        </authorList>
    </citation>
    <scope>NUCLEOTIDE SEQUENCE [MRNA]</scope>
</reference>
<reference key="3">
    <citation type="journal article" date="2001" name="Nature">
        <authorList>
            <person name="Scott I.C."/>
            <person name="Blitz I.L."/>
            <person name="Pappano W.N."/>
            <person name="Maas S.A."/>
            <person name="Cho K.W.Y."/>
            <person name="Greenspan D.S."/>
        </authorList>
    </citation>
    <scope>ERRATUM OF PUBMED:11260715</scope>
</reference>
<reference key="4">
    <citation type="submission" date="2003-04" db="EMBL/GenBank/DDBJ databases">
        <authorList>
            <consortium name="NIH - Zebrafish Gene Collection (ZGC) project"/>
        </authorList>
    </citation>
    <scope>NUCLEOTIDE SEQUENCE [LARGE SCALE MRNA]</scope>
    <source>
        <strain>AB</strain>
    </source>
</reference>
<accession>Q9DGH0</accession>
<organism>
    <name type="scientific">Danio rerio</name>
    <name type="common">Zebrafish</name>
    <name type="synonym">Brachydanio rerio</name>
    <dbReference type="NCBI Taxonomy" id="7955"/>
    <lineage>
        <taxon>Eukaryota</taxon>
        <taxon>Metazoa</taxon>
        <taxon>Chordata</taxon>
        <taxon>Craniata</taxon>
        <taxon>Vertebrata</taxon>
        <taxon>Euteleostomi</taxon>
        <taxon>Actinopterygii</taxon>
        <taxon>Neopterygii</taxon>
        <taxon>Teleostei</taxon>
        <taxon>Ostariophysi</taxon>
        <taxon>Cypriniformes</taxon>
        <taxon>Danionidae</taxon>
        <taxon>Danioninae</taxon>
        <taxon>Danio</taxon>
    </lineage>
</organism>
<protein>
    <recommendedName>
        <fullName>Twisted gastrulation protein homolog 1-A</fullName>
    </recommendedName>
</protein>
<proteinExistence type="evidence at transcript level"/>
<name>TWS1A_DANRE</name>
<keyword id="KW-0217">Developmental protein</keyword>
<keyword id="KW-0325">Glycoprotein</keyword>
<keyword id="KW-1185">Reference proteome</keyword>
<keyword id="KW-0964">Secreted</keyword>
<keyword id="KW-0732">Signal</keyword>
<comment type="function">
    <text evidence="1">Involved in dorsal-ventral patterning. Appears to function predominantly as a ventralizing factor, through its actions as a BMP signaling agonist, acting through both chd-dependent and chd-independent mechanisms. May also antagonize BMP signaling, probably via formation of ternary complexes with chd and BMPs, resulting in dorsalization (By similarity).</text>
</comment>
<comment type="subcellular location">
    <subcellularLocation>
        <location evidence="1">Secreted</location>
    </subcellularLocation>
</comment>
<comment type="similarity">
    <text evidence="3">Belongs to the twisted gastrulation protein family.</text>
</comment>
<feature type="signal peptide" evidence="2">
    <location>
        <begin position="1"/>
        <end position="26"/>
    </location>
</feature>
<feature type="chain" id="PRO_0000278812" description="Twisted gastrulation protein homolog 1-A">
    <location>
        <begin position="27"/>
        <end position="217"/>
    </location>
</feature>
<feature type="glycosylation site" description="N-linked (GlcNAc...) asparagine" evidence="2">
    <location>
        <position position="53"/>
    </location>
</feature>
<feature type="glycosylation site" description="N-linked (GlcNAc...) asparagine" evidence="2">
    <location>
        <position position="147"/>
    </location>
</feature>